<organism>
    <name type="scientific">Shigella flexneri</name>
    <dbReference type="NCBI Taxonomy" id="623"/>
    <lineage>
        <taxon>Bacteria</taxon>
        <taxon>Pseudomonadati</taxon>
        <taxon>Pseudomonadota</taxon>
        <taxon>Gammaproteobacteria</taxon>
        <taxon>Enterobacterales</taxon>
        <taxon>Enterobacteriaceae</taxon>
        <taxon>Shigella</taxon>
    </lineage>
</organism>
<keyword id="KW-0028">Amino-acid biosynthesis</keyword>
<keyword id="KW-0963">Cytoplasm</keyword>
<keyword id="KW-0368">Histidine biosynthesis</keyword>
<keyword id="KW-0413">Isomerase</keyword>
<keyword id="KW-1185">Reference proteome</keyword>
<gene>
    <name evidence="1" type="primary">hisA</name>
    <name type="ordered locus">SF2086</name>
    <name type="ordered locus">S2207</name>
</gene>
<protein>
    <recommendedName>
        <fullName evidence="1">1-(5-phosphoribosyl)-5-[(5-phosphoribosylamino)methylideneamino] imidazole-4-carboxamide isomerase</fullName>
        <ecNumber evidence="1">5.3.1.16</ecNumber>
    </recommendedName>
    <alternativeName>
        <fullName evidence="1">Phosphoribosylformimino-5-aminoimidazole carboxamide ribotide isomerase</fullName>
    </alternativeName>
</protein>
<comment type="catalytic activity">
    <reaction evidence="1">
        <text>1-(5-phospho-beta-D-ribosyl)-5-[(5-phospho-beta-D-ribosylamino)methylideneamino]imidazole-4-carboxamide = 5-[(5-phospho-1-deoxy-D-ribulos-1-ylimino)methylamino]-1-(5-phospho-beta-D-ribosyl)imidazole-4-carboxamide</text>
        <dbReference type="Rhea" id="RHEA:15469"/>
        <dbReference type="ChEBI" id="CHEBI:58435"/>
        <dbReference type="ChEBI" id="CHEBI:58525"/>
        <dbReference type="EC" id="5.3.1.16"/>
    </reaction>
</comment>
<comment type="pathway">
    <text evidence="1">Amino-acid biosynthesis; L-histidine biosynthesis; L-histidine from 5-phospho-alpha-D-ribose 1-diphosphate: step 4/9.</text>
</comment>
<comment type="subcellular location">
    <subcellularLocation>
        <location evidence="1">Cytoplasm</location>
    </subcellularLocation>
</comment>
<comment type="similarity">
    <text evidence="1">Belongs to the HisA/HisF family.</text>
</comment>
<feature type="chain" id="PRO_0000142051" description="1-(5-phosphoribosyl)-5-[(5-phosphoribosylamino)methylideneamino] imidazole-4-carboxamide isomerase">
    <location>
        <begin position="1"/>
        <end position="245"/>
    </location>
</feature>
<feature type="active site" description="Proton acceptor" evidence="1">
    <location>
        <position position="7"/>
    </location>
</feature>
<feature type="active site" description="Proton donor" evidence="1">
    <location>
        <position position="129"/>
    </location>
</feature>
<proteinExistence type="inferred from homology"/>
<evidence type="ECO:0000255" key="1">
    <source>
        <dbReference type="HAMAP-Rule" id="MF_01014"/>
    </source>
</evidence>
<name>HIS4_SHIFL</name>
<sequence length="245" mass="25969">MIIPALDLIDGTVVRLHQGDYGKQRDYGNDPLPRLQDYAAQGAEVLHLVDLTGAKDPAKRQIPLIKTLVAGVNVPVQVGGGVRSEEDVAALLEAGVARVVVGSTAVKSPDVVKGWFERFGADALVLALDVRIDEQGNKQVAVSGWQENSGVSLEQLVETYLPVGLKHVLCTDISRDGTLAGSNVSLYEEVCARYPQVAFQSSGGIGDINDVAALRGTGVRGVIVGRALLEGKFTVKEAIACWQNA</sequence>
<reference key="1">
    <citation type="journal article" date="2002" name="Nucleic Acids Res.">
        <title>Genome sequence of Shigella flexneri 2a: insights into pathogenicity through comparison with genomes of Escherichia coli K12 and O157.</title>
        <authorList>
            <person name="Jin Q."/>
            <person name="Yuan Z."/>
            <person name="Xu J."/>
            <person name="Wang Y."/>
            <person name="Shen Y."/>
            <person name="Lu W."/>
            <person name="Wang J."/>
            <person name="Liu H."/>
            <person name="Yang J."/>
            <person name="Yang F."/>
            <person name="Zhang X."/>
            <person name="Zhang J."/>
            <person name="Yang G."/>
            <person name="Wu H."/>
            <person name="Qu D."/>
            <person name="Dong J."/>
            <person name="Sun L."/>
            <person name="Xue Y."/>
            <person name="Zhao A."/>
            <person name="Gao Y."/>
            <person name="Zhu J."/>
            <person name="Kan B."/>
            <person name="Ding K."/>
            <person name="Chen S."/>
            <person name="Cheng H."/>
            <person name="Yao Z."/>
            <person name="He B."/>
            <person name="Chen R."/>
            <person name="Ma D."/>
            <person name="Qiang B."/>
            <person name="Wen Y."/>
            <person name="Hou Y."/>
            <person name="Yu J."/>
        </authorList>
    </citation>
    <scope>NUCLEOTIDE SEQUENCE [LARGE SCALE GENOMIC DNA]</scope>
    <source>
        <strain>301 / Serotype 2a</strain>
    </source>
</reference>
<reference key="2">
    <citation type="journal article" date="2003" name="Infect. Immun.">
        <title>Complete genome sequence and comparative genomics of Shigella flexneri serotype 2a strain 2457T.</title>
        <authorList>
            <person name="Wei J."/>
            <person name="Goldberg M.B."/>
            <person name="Burland V."/>
            <person name="Venkatesan M.M."/>
            <person name="Deng W."/>
            <person name="Fournier G."/>
            <person name="Mayhew G.F."/>
            <person name="Plunkett G. III"/>
            <person name="Rose D.J."/>
            <person name="Darling A."/>
            <person name="Mau B."/>
            <person name="Perna N.T."/>
            <person name="Payne S.M."/>
            <person name="Runyen-Janecky L.J."/>
            <person name="Zhou S."/>
            <person name="Schwartz D.C."/>
            <person name="Blattner F.R."/>
        </authorList>
    </citation>
    <scope>NUCLEOTIDE SEQUENCE [LARGE SCALE GENOMIC DNA]</scope>
    <source>
        <strain>ATCC 700930 / 2457T / Serotype 2a</strain>
    </source>
</reference>
<dbReference type="EC" id="5.3.1.16" evidence="1"/>
<dbReference type="EMBL" id="AE005674">
    <property type="protein sequence ID" value="AAN43626.2"/>
    <property type="molecule type" value="Genomic_DNA"/>
</dbReference>
<dbReference type="EMBL" id="AE014073">
    <property type="protein sequence ID" value="AAP17454.1"/>
    <property type="molecule type" value="Genomic_DNA"/>
</dbReference>
<dbReference type="RefSeq" id="NP_707919.2">
    <property type="nucleotide sequence ID" value="NC_004337.2"/>
</dbReference>
<dbReference type="RefSeq" id="WP_000586440.1">
    <property type="nucleotide sequence ID" value="NZ_WPGW01000112.1"/>
</dbReference>
<dbReference type="SMR" id="Q83R04"/>
<dbReference type="STRING" id="198214.SF2086"/>
<dbReference type="PaxDb" id="198214-SF2086"/>
<dbReference type="GeneID" id="1025300"/>
<dbReference type="KEGG" id="sfl:SF2086"/>
<dbReference type="KEGG" id="sfx:S2207"/>
<dbReference type="PATRIC" id="fig|198214.7.peg.2495"/>
<dbReference type="HOGENOM" id="CLU_048577_1_2_6"/>
<dbReference type="UniPathway" id="UPA00031">
    <property type="reaction ID" value="UER00009"/>
</dbReference>
<dbReference type="Proteomes" id="UP000001006">
    <property type="component" value="Chromosome"/>
</dbReference>
<dbReference type="Proteomes" id="UP000002673">
    <property type="component" value="Chromosome"/>
</dbReference>
<dbReference type="GO" id="GO:0005737">
    <property type="term" value="C:cytoplasm"/>
    <property type="evidence" value="ECO:0007669"/>
    <property type="project" value="UniProtKB-SubCell"/>
</dbReference>
<dbReference type="GO" id="GO:0003949">
    <property type="term" value="F:1-(5-phosphoribosyl)-5-[(5-phosphoribosylamino)methylideneamino]imidazole-4-carboxamide isomerase activity"/>
    <property type="evidence" value="ECO:0007669"/>
    <property type="project" value="UniProtKB-UniRule"/>
</dbReference>
<dbReference type="GO" id="GO:0000105">
    <property type="term" value="P:L-histidine biosynthetic process"/>
    <property type="evidence" value="ECO:0007669"/>
    <property type="project" value="UniProtKB-UniRule"/>
</dbReference>
<dbReference type="GO" id="GO:0000162">
    <property type="term" value="P:L-tryptophan biosynthetic process"/>
    <property type="evidence" value="ECO:0007669"/>
    <property type="project" value="TreeGrafter"/>
</dbReference>
<dbReference type="CDD" id="cd04732">
    <property type="entry name" value="HisA"/>
    <property type="match status" value="1"/>
</dbReference>
<dbReference type="FunFam" id="3.20.20.70:FF:000009">
    <property type="entry name" value="1-(5-phosphoribosyl)-5-[(5-phosphoribosylamino)methylideneamino] imidazole-4-carboxamide isomerase"/>
    <property type="match status" value="1"/>
</dbReference>
<dbReference type="Gene3D" id="3.20.20.70">
    <property type="entry name" value="Aldolase class I"/>
    <property type="match status" value="1"/>
</dbReference>
<dbReference type="HAMAP" id="MF_01014">
    <property type="entry name" value="HisA"/>
    <property type="match status" value="1"/>
</dbReference>
<dbReference type="InterPro" id="IPR013785">
    <property type="entry name" value="Aldolase_TIM"/>
</dbReference>
<dbReference type="InterPro" id="IPR006062">
    <property type="entry name" value="His_biosynth"/>
</dbReference>
<dbReference type="InterPro" id="IPR006063">
    <property type="entry name" value="HisA_bact_arch"/>
</dbReference>
<dbReference type="InterPro" id="IPR044524">
    <property type="entry name" value="Isoase_HisA-like"/>
</dbReference>
<dbReference type="InterPro" id="IPR023016">
    <property type="entry name" value="Isoase_HisA-like_bact"/>
</dbReference>
<dbReference type="InterPro" id="IPR011060">
    <property type="entry name" value="RibuloseP-bd_barrel"/>
</dbReference>
<dbReference type="NCBIfam" id="TIGR00007">
    <property type="entry name" value="1-(5-phosphoribosyl)-5-[(5-phosphoribosylamino)methylideneamino]imidazole-4-carboxamide isomerase"/>
    <property type="match status" value="1"/>
</dbReference>
<dbReference type="PANTHER" id="PTHR43090">
    <property type="entry name" value="1-(5-PHOSPHORIBOSYL)-5-[(5-PHOSPHORIBOSYLAMINO)METHYLIDENEAMINO] IMIDAZOLE-4-CARBOXAMIDE ISOMERASE"/>
    <property type="match status" value="1"/>
</dbReference>
<dbReference type="PANTHER" id="PTHR43090:SF2">
    <property type="entry name" value="1-(5-PHOSPHORIBOSYL)-5-[(5-PHOSPHORIBOSYLAMINO)METHYLIDENEAMINO] IMIDAZOLE-4-CARBOXAMIDE ISOMERASE"/>
    <property type="match status" value="1"/>
</dbReference>
<dbReference type="Pfam" id="PF00977">
    <property type="entry name" value="His_biosynth"/>
    <property type="match status" value="1"/>
</dbReference>
<dbReference type="SUPFAM" id="SSF51366">
    <property type="entry name" value="Ribulose-phoshate binding barrel"/>
    <property type="match status" value="1"/>
</dbReference>
<accession>Q83R04</accession>
<accession>Q7UCB7</accession>